<sequence>MACPVQLGFQDAASPIMEELTYFHDHTLMIVFLISSLVLYIISLMLTTELTHTSTMDAQEVETVWTILPAVILILIALPSLRILYMMDEITTPSLTLKTMGHQWYWSYEYTDYENLCFDSYMTPSSDLKPGELRLLEVDNRVVLPTEMSIRMLISSEDVLHSWTVPSLGVKTDAIPGRLNQATLMTSRPGIYYGQCSEICGANHSFMPIVLELVPLKHFEEWLLAML</sequence>
<dbReference type="EC" id="7.1.1.9"/>
<dbReference type="EMBL" id="L22775">
    <property type="protein sequence ID" value="AAA20566.1"/>
    <property type="molecule type" value="Genomic_DNA"/>
</dbReference>
<dbReference type="PIR" id="I61840">
    <property type="entry name" value="I61840"/>
</dbReference>
<dbReference type="RefSeq" id="YP_008378946.1">
    <property type="nucleotide sequence ID" value="NC_021945.1"/>
</dbReference>
<dbReference type="SMR" id="P98027"/>
<dbReference type="GO" id="GO:0005743">
    <property type="term" value="C:mitochondrial inner membrane"/>
    <property type="evidence" value="ECO:0007669"/>
    <property type="project" value="UniProtKB-SubCell"/>
</dbReference>
<dbReference type="GO" id="GO:0045277">
    <property type="term" value="C:respiratory chain complex IV"/>
    <property type="evidence" value="ECO:0000250"/>
    <property type="project" value="UniProtKB"/>
</dbReference>
<dbReference type="GO" id="GO:0005507">
    <property type="term" value="F:copper ion binding"/>
    <property type="evidence" value="ECO:0007669"/>
    <property type="project" value="InterPro"/>
</dbReference>
<dbReference type="GO" id="GO:0004129">
    <property type="term" value="F:cytochrome-c oxidase activity"/>
    <property type="evidence" value="ECO:0007669"/>
    <property type="project" value="UniProtKB-EC"/>
</dbReference>
<dbReference type="GO" id="GO:0042773">
    <property type="term" value="P:ATP synthesis coupled electron transport"/>
    <property type="evidence" value="ECO:0007669"/>
    <property type="project" value="TreeGrafter"/>
</dbReference>
<dbReference type="CDD" id="cd13912">
    <property type="entry name" value="CcO_II_C"/>
    <property type="match status" value="1"/>
</dbReference>
<dbReference type="FunFam" id="1.10.287.90:FF:000001">
    <property type="entry name" value="Cytochrome c oxidase subunit 2"/>
    <property type="match status" value="1"/>
</dbReference>
<dbReference type="FunFam" id="2.60.40.420:FF:000001">
    <property type="entry name" value="Cytochrome c oxidase subunit 2"/>
    <property type="match status" value="1"/>
</dbReference>
<dbReference type="Gene3D" id="1.10.287.90">
    <property type="match status" value="1"/>
</dbReference>
<dbReference type="Gene3D" id="2.60.40.420">
    <property type="entry name" value="Cupredoxins - blue copper proteins"/>
    <property type="match status" value="1"/>
</dbReference>
<dbReference type="InterPro" id="IPR045187">
    <property type="entry name" value="CcO_II"/>
</dbReference>
<dbReference type="InterPro" id="IPR002429">
    <property type="entry name" value="CcO_II-like_C"/>
</dbReference>
<dbReference type="InterPro" id="IPR034210">
    <property type="entry name" value="CcO_II_C"/>
</dbReference>
<dbReference type="InterPro" id="IPR001505">
    <property type="entry name" value="Copper_CuA"/>
</dbReference>
<dbReference type="InterPro" id="IPR008972">
    <property type="entry name" value="Cupredoxin"/>
</dbReference>
<dbReference type="InterPro" id="IPR014222">
    <property type="entry name" value="Cyt_c_oxidase_su2"/>
</dbReference>
<dbReference type="InterPro" id="IPR011759">
    <property type="entry name" value="Cyt_c_oxidase_su2_TM_dom"/>
</dbReference>
<dbReference type="InterPro" id="IPR036257">
    <property type="entry name" value="Cyt_c_oxidase_su2_TM_sf"/>
</dbReference>
<dbReference type="NCBIfam" id="TIGR02866">
    <property type="entry name" value="CoxB"/>
    <property type="match status" value="1"/>
</dbReference>
<dbReference type="PANTHER" id="PTHR22888:SF9">
    <property type="entry name" value="CYTOCHROME C OXIDASE SUBUNIT 2"/>
    <property type="match status" value="1"/>
</dbReference>
<dbReference type="PANTHER" id="PTHR22888">
    <property type="entry name" value="CYTOCHROME C OXIDASE, SUBUNIT II"/>
    <property type="match status" value="1"/>
</dbReference>
<dbReference type="Pfam" id="PF00116">
    <property type="entry name" value="COX2"/>
    <property type="match status" value="1"/>
</dbReference>
<dbReference type="Pfam" id="PF02790">
    <property type="entry name" value="COX2_TM"/>
    <property type="match status" value="1"/>
</dbReference>
<dbReference type="PRINTS" id="PR01166">
    <property type="entry name" value="CYCOXIDASEII"/>
</dbReference>
<dbReference type="SUPFAM" id="SSF49503">
    <property type="entry name" value="Cupredoxins"/>
    <property type="match status" value="1"/>
</dbReference>
<dbReference type="SUPFAM" id="SSF81464">
    <property type="entry name" value="Cytochrome c oxidase subunit II-like, transmembrane region"/>
    <property type="match status" value="1"/>
</dbReference>
<dbReference type="PROSITE" id="PS00078">
    <property type="entry name" value="COX2"/>
    <property type="match status" value="1"/>
</dbReference>
<dbReference type="PROSITE" id="PS50857">
    <property type="entry name" value="COX2_CUA"/>
    <property type="match status" value="1"/>
</dbReference>
<dbReference type="PROSITE" id="PS50999">
    <property type="entry name" value="COX2_TM"/>
    <property type="match status" value="1"/>
</dbReference>
<name>COX2_CHEME</name>
<geneLocation type="mitochondrion"/>
<organism>
    <name type="scientific">Cheirogaleus medius</name>
    <name type="common">Fat-tailed dwarf lemur</name>
    <dbReference type="NCBI Taxonomy" id="9460"/>
    <lineage>
        <taxon>Eukaryota</taxon>
        <taxon>Metazoa</taxon>
        <taxon>Chordata</taxon>
        <taxon>Craniata</taxon>
        <taxon>Vertebrata</taxon>
        <taxon>Euteleostomi</taxon>
        <taxon>Mammalia</taxon>
        <taxon>Eutheria</taxon>
        <taxon>Euarchontoglires</taxon>
        <taxon>Primates</taxon>
        <taxon>Strepsirrhini</taxon>
        <taxon>Lemuriformes</taxon>
        <taxon>Cheirogaleidae</taxon>
        <taxon>Cheirogaleus</taxon>
    </lineage>
</organism>
<evidence type="ECO:0000250" key="1">
    <source>
        <dbReference type="UniProtKB" id="P00403"/>
    </source>
</evidence>
<evidence type="ECO:0000250" key="2">
    <source>
        <dbReference type="UniProtKB" id="P00410"/>
    </source>
</evidence>
<evidence type="ECO:0000250" key="3">
    <source>
        <dbReference type="UniProtKB" id="P68530"/>
    </source>
</evidence>
<evidence type="ECO:0000305" key="4"/>
<protein>
    <recommendedName>
        <fullName>Cytochrome c oxidase subunit 2</fullName>
        <ecNumber>7.1.1.9</ecNumber>
    </recommendedName>
    <alternativeName>
        <fullName>Cytochrome c oxidase polypeptide II</fullName>
    </alternativeName>
</protein>
<feature type="chain" id="PRO_0000183546" description="Cytochrome c oxidase subunit 2">
    <location>
        <begin position="1"/>
        <end position="227"/>
    </location>
</feature>
<feature type="topological domain" description="Mitochondrial intermembrane" evidence="3">
    <location>
        <begin position="1"/>
        <end position="14"/>
    </location>
</feature>
<feature type="transmembrane region" description="Helical; Name=I" evidence="3">
    <location>
        <begin position="15"/>
        <end position="45"/>
    </location>
</feature>
<feature type="topological domain" description="Mitochondrial matrix" evidence="3">
    <location>
        <begin position="46"/>
        <end position="59"/>
    </location>
</feature>
<feature type="transmembrane region" description="Helical; Name=II" evidence="3">
    <location>
        <begin position="60"/>
        <end position="87"/>
    </location>
</feature>
<feature type="topological domain" description="Mitochondrial intermembrane" evidence="3">
    <location>
        <begin position="88"/>
        <end position="227"/>
    </location>
</feature>
<feature type="binding site" evidence="3">
    <location>
        <position position="161"/>
    </location>
    <ligand>
        <name>Cu cation</name>
        <dbReference type="ChEBI" id="CHEBI:23378"/>
        <label>A1</label>
    </ligand>
</feature>
<feature type="binding site" evidence="3">
    <location>
        <position position="196"/>
    </location>
    <ligand>
        <name>Cu cation</name>
        <dbReference type="ChEBI" id="CHEBI:23378"/>
        <label>A1</label>
    </ligand>
</feature>
<feature type="binding site" evidence="3">
    <location>
        <position position="196"/>
    </location>
    <ligand>
        <name>Cu cation</name>
        <dbReference type="ChEBI" id="CHEBI:23378"/>
        <label>A2</label>
    </ligand>
</feature>
<feature type="binding site" evidence="3">
    <location>
        <position position="198"/>
    </location>
    <ligand>
        <name>Cu cation</name>
        <dbReference type="ChEBI" id="CHEBI:23378"/>
        <label>A2</label>
    </ligand>
</feature>
<feature type="binding site" evidence="3">
    <location>
        <position position="198"/>
    </location>
    <ligand>
        <name>Mg(2+)</name>
        <dbReference type="ChEBI" id="CHEBI:18420"/>
        <note>ligand shared with MT-CO1</note>
    </ligand>
</feature>
<feature type="binding site" evidence="3">
    <location>
        <position position="200"/>
    </location>
    <ligand>
        <name>Cu cation</name>
        <dbReference type="ChEBI" id="CHEBI:23378"/>
        <label>A1</label>
    </ligand>
</feature>
<feature type="binding site" evidence="3">
    <location>
        <position position="200"/>
    </location>
    <ligand>
        <name>Cu cation</name>
        <dbReference type="ChEBI" id="CHEBI:23378"/>
        <label>A2</label>
    </ligand>
</feature>
<feature type="binding site" evidence="3">
    <location>
        <position position="204"/>
    </location>
    <ligand>
        <name>Cu cation</name>
        <dbReference type="ChEBI" id="CHEBI:23378"/>
        <label>A2</label>
    </ligand>
</feature>
<feature type="binding site" evidence="3">
    <location>
        <position position="207"/>
    </location>
    <ligand>
        <name>Cu cation</name>
        <dbReference type="ChEBI" id="CHEBI:23378"/>
        <label>A1</label>
    </ligand>
</feature>
<reference key="1">
    <citation type="journal article" date="1994" name="J. Mol. Evol.">
        <title>Evolution of the primate cytochrome c oxidase subunit II gene.</title>
        <authorList>
            <person name="Adkins R.M."/>
            <person name="Honeycutt R.L."/>
        </authorList>
    </citation>
    <scope>NUCLEOTIDE SEQUENCE [GENOMIC DNA]</scope>
</reference>
<accession>P98027</accession>
<keyword id="KW-0186">Copper</keyword>
<keyword id="KW-0249">Electron transport</keyword>
<keyword id="KW-0460">Magnesium</keyword>
<keyword id="KW-0472">Membrane</keyword>
<keyword id="KW-0479">Metal-binding</keyword>
<keyword id="KW-0496">Mitochondrion</keyword>
<keyword id="KW-0999">Mitochondrion inner membrane</keyword>
<keyword id="KW-0679">Respiratory chain</keyword>
<keyword id="KW-1278">Translocase</keyword>
<keyword id="KW-0812">Transmembrane</keyword>
<keyword id="KW-1133">Transmembrane helix</keyword>
<keyword id="KW-0813">Transport</keyword>
<proteinExistence type="inferred from homology"/>
<comment type="function">
    <text evidence="2">Component of the cytochrome c oxidase, the last enzyme in the mitochondrial electron transport chain which drives oxidative phosphorylation. The respiratory chain contains 3 multisubunit complexes succinate dehydrogenase (complex II, CII), ubiquinol-cytochrome c oxidoreductase (cytochrome b-c1 complex, complex III, CIII) and cytochrome c oxidase (complex IV, CIV), that cooperate to transfer electrons derived from NADH and succinate to molecular oxygen, creating an electrochemical gradient over the inner membrane that drives transmembrane transport and the ATP synthase. Cytochrome c oxidase is the component of the respiratory chain that catalyzes the reduction of oxygen to water. Electrons originating from reduced cytochrome c in the intermembrane space (IMS) are transferred via the dinuclear copper A center (CU(A)) of subunit 2 and heme A of subunit 1 to the active site in subunit 1, a binuclear center (BNC) formed by heme A3 and copper B (CU(B)). The BNC reduces molecular oxygen to 2 water molecules using 4 electrons from cytochrome c in the IMS and 4 protons from the mitochondrial matrix.</text>
</comment>
<comment type="catalytic activity">
    <reaction evidence="2">
        <text>4 Fe(II)-[cytochrome c] + O2 + 8 H(+)(in) = 4 Fe(III)-[cytochrome c] + 2 H2O + 4 H(+)(out)</text>
        <dbReference type="Rhea" id="RHEA:11436"/>
        <dbReference type="Rhea" id="RHEA-COMP:10350"/>
        <dbReference type="Rhea" id="RHEA-COMP:14399"/>
        <dbReference type="ChEBI" id="CHEBI:15377"/>
        <dbReference type="ChEBI" id="CHEBI:15378"/>
        <dbReference type="ChEBI" id="CHEBI:15379"/>
        <dbReference type="ChEBI" id="CHEBI:29033"/>
        <dbReference type="ChEBI" id="CHEBI:29034"/>
        <dbReference type="EC" id="7.1.1.9"/>
    </reaction>
    <physiologicalReaction direction="left-to-right" evidence="2">
        <dbReference type="Rhea" id="RHEA:11437"/>
    </physiologicalReaction>
</comment>
<comment type="cofactor">
    <cofactor evidence="3">
        <name>Cu cation</name>
        <dbReference type="ChEBI" id="CHEBI:23378"/>
    </cofactor>
    <text evidence="3">Binds a dinuclear copper A center per subunit.</text>
</comment>
<comment type="subunit">
    <text evidence="1 3">Component of the cytochrome c oxidase (complex IV, CIV), a multisubunit enzyme composed of 14 subunits. The complex is composed of a catalytic core of 3 subunits MT-CO1, MT-CO2 and MT-CO3, encoded in the mitochondrial DNA, and 11 supernumerary subunits COX4I, COX5A, COX5B, COX6A, COX6B, COX6C, COX7A, COX7B, COX7C, COX8 and NDUFA4, which are encoded in the nuclear genome. The complex exists as a monomer or a dimer and forms supercomplexes (SCs) in the inner mitochondrial membrane with NADH-ubiquinone oxidoreductase (complex I, CI) and ubiquinol-cytochrome c oxidoreductase (cytochrome b-c1 complex, complex III, CIII), resulting in different assemblies (supercomplex SCI(1)III(2)IV(1) and megacomplex MCI(2)III(2)IV(2)) (By similarity). Found in a complex with TMEM177, COA6, COX18, COX20, SCO1 and SCO2. Interacts with TMEM177 in a COX20-dependent manner. Interacts with COX20. Interacts with COX16 (By similarity).</text>
</comment>
<comment type="subcellular location">
    <subcellularLocation>
        <location evidence="3">Mitochondrion inner membrane</location>
        <topology evidence="3">Multi-pass membrane protein</topology>
    </subcellularLocation>
</comment>
<comment type="similarity">
    <text evidence="4">Belongs to the cytochrome c oxidase subunit 2 family.</text>
</comment>
<gene>
    <name type="primary">MT-CO2</name>
    <name type="synonym">COII</name>
    <name type="synonym">COX2</name>
    <name type="synonym">COXII</name>
    <name type="synonym">MTCO2</name>
</gene>